<feature type="signal peptide" evidence="1">
    <location>
        <begin position="1"/>
        <end position="20"/>
    </location>
</feature>
<feature type="chain" id="PRO_0000018047" description="Lipoprotein YfjS">
    <location>
        <begin position="21"/>
        <end position="147"/>
    </location>
</feature>
<feature type="lipid moiety-binding region" description="N-palmitoyl cysteine" evidence="1">
    <location>
        <position position="21"/>
    </location>
</feature>
<feature type="lipid moiety-binding region" description="S-diacylglycerol cysteine" evidence="1">
    <location>
        <position position="21"/>
    </location>
</feature>
<feature type="mutagenesis site" description="3-fold improved induction of degP upon overexpression; when associated with Q-136." evidence="2">
    <original>GF</original>
    <variation>DY</variation>
    <location>
        <begin position="60"/>
        <end position="61"/>
    </location>
</feature>
<feature type="mutagenesis site" description="3-fold improved induction of degP upon overexpression; when associated with 60-D-Y-61." evidence="2">
    <original>R</original>
    <variation>Q</variation>
    <location>
        <position position="136"/>
    </location>
</feature>
<accession>O52982</accession>
<accession>Q2MAD5</accession>
<organism>
    <name type="scientific">Escherichia coli (strain K12)</name>
    <dbReference type="NCBI Taxonomy" id="83333"/>
    <lineage>
        <taxon>Bacteria</taxon>
        <taxon>Pseudomonadati</taxon>
        <taxon>Pseudomonadota</taxon>
        <taxon>Gammaproteobacteria</taxon>
        <taxon>Enterobacterales</taxon>
        <taxon>Enterobacteriaceae</taxon>
        <taxon>Escherichia</taxon>
    </lineage>
</organism>
<gene>
    <name type="primary">yfjS</name>
    <name type="ordered locus">b2636</name>
    <name type="ordered locus">JW5921</name>
</gene>
<reference key="1">
    <citation type="journal article" date="1997" name="Science">
        <title>The complete genome sequence of Escherichia coli K-12.</title>
        <authorList>
            <person name="Blattner F.R."/>
            <person name="Plunkett G. III"/>
            <person name="Bloch C.A."/>
            <person name="Perna N.T."/>
            <person name="Burland V."/>
            <person name="Riley M."/>
            <person name="Collado-Vides J."/>
            <person name="Glasner J.D."/>
            <person name="Rode C.K."/>
            <person name="Mayhew G.F."/>
            <person name="Gregor J."/>
            <person name="Davis N.W."/>
            <person name="Kirkpatrick H.A."/>
            <person name="Goeden M.A."/>
            <person name="Rose D.J."/>
            <person name="Mau B."/>
            <person name="Shao Y."/>
        </authorList>
    </citation>
    <scope>NUCLEOTIDE SEQUENCE [LARGE SCALE GENOMIC DNA]</scope>
    <source>
        <strain>K12 / MG1655 / ATCC 47076</strain>
    </source>
</reference>
<reference key="2">
    <citation type="journal article" date="2006" name="Mol. Syst. Biol.">
        <title>Highly accurate genome sequences of Escherichia coli K-12 strains MG1655 and W3110.</title>
        <authorList>
            <person name="Hayashi K."/>
            <person name="Morooka N."/>
            <person name="Yamamoto Y."/>
            <person name="Fujita K."/>
            <person name="Isono K."/>
            <person name="Choi S."/>
            <person name="Ohtsubo E."/>
            <person name="Baba T."/>
            <person name="Wanner B.L."/>
            <person name="Mori H."/>
            <person name="Horiuchi T."/>
        </authorList>
    </citation>
    <scope>NUCLEOTIDE SEQUENCE [LARGE SCALE GENOMIC DNA]</scope>
    <source>
        <strain>K12 / W3110 / ATCC 27325 / DSM 5911</strain>
    </source>
</reference>
<reference key="3">
    <citation type="journal article" date="2004" name="J. Biol. Chem.">
        <title>Effects of lipoprotein overproduction on the induction of DegP (HtrA) involved in quality control in the Escherichia coli periplasm.</title>
        <authorList>
            <person name="Miyadai H."/>
            <person name="Tanaka-Masuda K."/>
            <person name="Matsuyama S."/>
            <person name="Tokuda H."/>
        </authorList>
    </citation>
    <scope>FUNCTION</scope>
    <scope>SUBCELLULAR LOCATION</scope>
    <scope>MUTAGENESIS OF 60-GLY-PHE-61 AND ARG-136</scope>
    <source>
        <strain>K12 / MC4100 / ATCC 35695 / DSM 6574</strain>
    </source>
</reference>
<name>YFJS_ECOLI</name>
<evidence type="ECO:0000255" key="1">
    <source>
        <dbReference type="PROSITE-ProRule" id="PRU00303"/>
    </source>
</evidence>
<evidence type="ECO:0000269" key="2">
    <source>
    </source>
</evidence>
<evidence type="ECO:0000305" key="3"/>
<evidence type="ECO:0000305" key="4">
    <source>
    </source>
</evidence>
<comment type="function">
    <text evidence="2">Does not induce degP when overexpressed unless it is mutated to resemble YafY.</text>
</comment>
<comment type="subcellular location">
    <subcellularLocation>
        <location evidence="4">Cell inner membrane</location>
        <topology evidence="4">Lipid-anchor</topology>
    </subcellularLocation>
</comment>
<comment type="similarity">
    <text evidence="3">To E.coli YafY.</text>
</comment>
<comment type="sequence caution" evidence="3">
    <conflict type="erroneous initiation">
        <sequence resource="EMBL-CDS" id="AAA79804"/>
    </conflict>
    <text>Extended N-terminus.</text>
</comment>
<sequence>MKRKTLPLLALVATSLFLSACDDRSDDLKAISKFKDLTPPRFSDVVSRQDDVSEEWSQVGFSSGLTLQVLRTRESPDGCEGGSYYYLVDMEEKTVQPLMNALCIADNIKLEYHEVTDPYTKEKYFEYSHDGKLMGRLLIPSNPDNRE</sequence>
<proteinExistence type="evidence at protein level"/>
<protein>
    <recommendedName>
        <fullName>Lipoprotein YfjS</fullName>
    </recommendedName>
</protein>
<keyword id="KW-0997">Cell inner membrane</keyword>
<keyword id="KW-1003">Cell membrane</keyword>
<keyword id="KW-0449">Lipoprotein</keyword>
<keyword id="KW-0472">Membrane</keyword>
<keyword id="KW-0564">Palmitate</keyword>
<keyword id="KW-1185">Reference proteome</keyword>
<keyword id="KW-0732">Signal</keyword>
<dbReference type="EMBL" id="U36840">
    <property type="protein sequence ID" value="AAA79804.1"/>
    <property type="status" value="ALT_INIT"/>
    <property type="molecule type" value="Genomic_DNA"/>
</dbReference>
<dbReference type="EMBL" id="U00096">
    <property type="protein sequence ID" value="AAC75684.2"/>
    <property type="molecule type" value="Genomic_DNA"/>
</dbReference>
<dbReference type="EMBL" id="AP009048">
    <property type="protein sequence ID" value="BAE76771.1"/>
    <property type="molecule type" value="Genomic_DNA"/>
</dbReference>
<dbReference type="PIR" id="F65042">
    <property type="entry name" value="F65042"/>
</dbReference>
<dbReference type="RefSeq" id="NP_417124.4">
    <property type="nucleotide sequence ID" value="NC_000913.3"/>
</dbReference>
<dbReference type="RefSeq" id="WP_000824222.1">
    <property type="nucleotide sequence ID" value="NZ_LN832404.1"/>
</dbReference>
<dbReference type="BioGRID" id="4260628">
    <property type="interactions" value="8"/>
</dbReference>
<dbReference type="FunCoup" id="O52982">
    <property type="interactions" value="314"/>
</dbReference>
<dbReference type="STRING" id="511145.b2636"/>
<dbReference type="PaxDb" id="511145-b2636"/>
<dbReference type="EnsemblBacteria" id="AAC75684">
    <property type="protein sequence ID" value="AAC75684"/>
    <property type="gene ID" value="b2636"/>
</dbReference>
<dbReference type="GeneID" id="945668"/>
<dbReference type="KEGG" id="ecj:JW5921"/>
<dbReference type="KEGG" id="eco:b2636"/>
<dbReference type="KEGG" id="ecoc:C3026_14580"/>
<dbReference type="PATRIC" id="fig|511145.12.peg.2730"/>
<dbReference type="eggNOG" id="ENOG5032TZC">
    <property type="taxonomic scope" value="Bacteria"/>
</dbReference>
<dbReference type="HOGENOM" id="CLU_149187_0_0_6"/>
<dbReference type="InParanoid" id="O52982"/>
<dbReference type="OrthoDB" id="6521484at2"/>
<dbReference type="BioCyc" id="EcoCyc:G7371-MONOMER"/>
<dbReference type="PRO" id="PR:O52982"/>
<dbReference type="Proteomes" id="UP000000625">
    <property type="component" value="Chromosome"/>
</dbReference>
<dbReference type="GO" id="GO:0005886">
    <property type="term" value="C:plasma membrane"/>
    <property type="evidence" value="ECO:0000314"/>
    <property type="project" value="UniProtKB"/>
</dbReference>
<dbReference type="InterPro" id="IPR046809">
    <property type="entry name" value="YfjS_YafY_dom"/>
</dbReference>
<dbReference type="Pfam" id="PF20494">
    <property type="entry name" value="YfjS_YafY"/>
    <property type="match status" value="1"/>
</dbReference>
<dbReference type="PROSITE" id="PS51257">
    <property type="entry name" value="PROKAR_LIPOPROTEIN"/>
    <property type="match status" value="1"/>
</dbReference>